<accession>Q0TCP2</accession>
<keyword id="KW-0997">Cell inner membrane</keyword>
<keyword id="KW-1003">Cell membrane</keyword>
<keyword id="KW-0472">Membrane</keyword>
<keyword id="KW-0762">Sugar transport</keyword>
<keyword id="KW-0812">Transmembrane</keyword>
<keyword id="KW-1133">Transmembrane helix</keyword>
<keyword id="KW-0813">Transport</keyword>
<feature type="chain" id="PRO_1000214049" description="Sialic acid transporter NanT">
    <location>
        <begin position="1"/>
        <end position="496"/>
    </location>
</feature>
<feature type="transmembrane region" description="Helical" evidence="1">
    <location>
        <begin position="22"/>
        <end position="42"/>
    </location>
</feature>
<feature type="transmembrane region" description="Helical" evidence="1">
    <location>
        <begin position="58"/>
        <end position="78"/>
    </location>
</feature>
<feature type="transmembrane region" description="Helical" evidence="1">
    <location>
        <begin position="92"/>
        <end position="112"/>
    </location>
</feature>
<feature type="transmembrane region" description="Helical" evidence="1">
    <location>
        <begin position="116"/>
        <end position="136"/>
    </location>
</feature>
<feature type="transmembrane region" description="Helical" evidence="1">
    <location>
        <begin position="148"/>
        <end position="168"/>
    </location>
</feature>
<feature type="transmembrane region" description="Helical" evidence="1">
    <location>
        <begin position="170"/>
        <end position="190"/>
    </location>
</feature>
<feature type="transmembrane region" description="Helical" evidence="1">
    <location>
        <begin position="224"/>
        <end position="244"/>
    </location>
</feature>
<feature type="transmembrane region" description="Helical" evidence="1">
    <location>
        <begin position="247"/>
        <end position="267"/>
    </location>
</feature>
<feature type="transmembrane region" description="Helical" evidence="1">
    <location>
        <begin position="278"/>
        <end position="298"/>
    </location>
</feature>
<feature type="transmembrane region" description="Helical" evidence="1">
    <location>
        <begin position="313"/>
        <end position="333"/>
    </location>
</feature>
<feature type="transmembrane region" description="Helical" evidence="1">
    <location>
        <begin position="353"/>
        <end position="375"/>
    </location>
</feature>
<feature type="transmembrane region" description="Helical" evidence="1">
    <location>
        <begin position="406"/>
        <end position="426"/>
    </location>
</feature>
<feature type="transmembrane region" description="Helical" evidence="1">
    <location>
        <begin position="431"/>
        <end position="451"/>
    </location>
</feature>
<dbReference type="EMBL" id="CP000247">
    <property type="protein sequence ID" value="ABG71287.1"/>
    <property type="molecule type" value="Genomic_DNA"/>
</dbReference>
<dbReference type="RefSeq" id="WP_000108474.1">
    <property type="nucleotide sequence ID" value="NC_008253.1"/>
</dbReference>
<dbReference type="SMR" id="Q0TCP2"/>
<dbReference type="KEGG" id="ecp:ECP_3307"/>
<dbReference type="HOGENOM" id="CLU_001265_46_8_6"/>
<dbReference type="Proteomes" id="UP000009182">
    <property type="component" value="Chromosome"/>
</dbReference>
<dbReference type="GO" id="GO:0005886">
    <property type="term" value="C:plasma membrane"/>
    <property type="evidence" value="ECO:0007669"/>
    <property type="project" value="UniProtKB-SubCell"/>
</dbReference>
<dbReference type="GO" id="GO:0046943">
    <property type="term" value="F:carboxylic acid transmembrane transporter activity"/>
    <property type="evidence" value="ECO:0007669"/>
    <property type="project" value="TreeGrafter"/>
</dbReference>
<dbReference type="GO" id="GO:0015538">
    <property type="term" value="F:sialic acid:proton symporter activity"/>
    <property type="evidence" value="ECO:0007669"/>
    <property type="project" value="UniProtKB-UniRule"/>
</dbReference>
<dbReference type="CDD" id="cd17316">
    <property type="entry name" value="MFS_SV2_like"/>
    <property type="match status" value="1"/>
</dbReference>
<dbReference type="FunFam" id="1.20.1250.20:FF:000027">
    <property type="entry name" value="Sialic acid transporter NanT"/>
    <property type="match status" value="1"/>
</dbReference>
<dbReference type="FunFam" id="1.20.1250.20:FF:000038">
    <property type="entry name" value="Sialic acid transporter NanT"/>
    <property type="match status" value="1"/>
</dbReference>
<dbReference type="Gene3D" id="1.20.1250.20">
    <property type="entry name" value="MFS general substrate transporter like domains"/>
    <property type="match status" value="2"/>
</dbReference>
<dbReference type="HAMAP" id="MF_01238">
    <property type="entry name" value="MFS_NanT"/>
    <property type="match status" value="1"/>
</dbReference>
<dbReference type="InterPro" id="IPR011701">
    <property type="entry name" value="MFS"/>
</dbReference>
<dbReference type="InterPro" id="IPR020846">
    <property type="entry name" value="MFS_dom"/>
</dbReference>
<dbReference type="InterPro" id="IPR036259">
    <property type="entry name" value="MFS_trans_sf"/>
</dbReference>
<dbReference type="InterPro" id="IPR004742">
    <property type="entry name" value="SA_transporter"/>
</dbReference>
<dbReference type="NCBIfam" id="TIGR00891">
    <property type="entry name" value="2A0112"/>
    <property type="match status" value="1"/>
</dbReference>
<dbReference type="NCBIfam" id="NF003024">
    <property type="entry name" value="PRK03893.1"/>
    <property type="match status" value="1"/>
</dbReference>
<dbReference type="PANTHER" id="PTHR23508">
    <property type="entry name" value="CARBOXYLIC ACID TRANSPORTER PROTEIN HOMOLOG"/>
    <property type="match status" value="1"/>
</dbReference>
<dbReference type="PANTHER" id="PTHR23508:SF3">
    <property type="entry name" value="SIALIC ACID TRANSPORTER NANT"/>
    <property type="match status" value="1"/>
</dbReference>
<dbReference type="Pfam" id="PF07690">
    <property type="entry name" value="MFS_1"/>
    <property type="match status" value="1"/>
</dbReference>
<dbReference type="SUPFAM" id="SSF103473">
    <property type="entry name" value="MFS general substrate transporter"/>
    <property type="match status" value="1"/>
</dbReference>
<dbReference type="PROSITE" id="PS50850">
    <property type="entry name" value="MFS"/>
    <property type="match status" value="1"/>
</dbReference>
<sequence length="496" mass="53567">MSTTTQNIPWYRHLNRAQWRAFSAAWLGYLLDGFDFVLIALVLTEVQGEFGLTTVQAASLISAAFISRWFGGLMLGAMGDRYGRRLAMVTSIVLFSAGTLACGFAPGYITMFIARLVIGMGMAGEYGSSATYVIESWPKHLRNKASGFLISGFSVGAVVAAQVYSLVVPVWGWRALFFIGILPIIFALWLRKNIPEAEDWKEKHGGKAPVRTMVDILYRGEHRIANIVMTLAAATALWFCFAGNLQNAAIVAVLGLLCAAIFISFMVQSTGKRWPTGVMLMVVVLFAFLYSWPIQALLPTYLKTDLAYDPHTVANVLFFSGFGAAVGCCVGGFLGDWLGTRKAYVCSLLASQLLIIPVFAIGGANVWVLGLLLFFQQMLGQGIAGILPKLIGGYFDTDQRAAGLGFTYNVGALGGALAPIIGALIAQRLDLGTALASLSFSLTFVVILLIGLDMPSRVQRWLRPEALRTHDAIDGKPFSGAVPFGSAKNNLVKTKS</sequence>
<evidence type="ECO:0000255" key="1">
    <source>
        <dbReference type="HAMAP-Rule" id="MF_01238"/>
    </source>
</evidence>
<organism>
    <name type="scientific">Escherichia coli O6:K15:H31 (strain 536 / UPEC)</name>
    <dbReference type="NCBI Taxonomy" id="362663"/>
    <lineage>
        <taxon>Bacteria</taxon>
        <taxon>Pseudomonadati</taxon>
        <taxon>Pseudomonadota</taxon>
        <taxon>Gammaproteobacteria</taxon>
        <taxon>Enterobacterales</taxon>
        <taxon>Enterobacteriaceae</taxon>
        <taxon>Escherichia</taxon>
    </lineage>
</organism>
<name>NANT_ECOL5</name>
<comment type="function">
    <text evidence="1">Catalyzes the proton-dependent transport of sialic acid.</text>
</comment>
<comment type="catalytic activity">
    <reaction evidence="1">
        <text>N-acetylneuraminate(in) + H(+)(in) = N-acetylneuraminate(out) + H(+)(out)</text>
        <dbReference type="Rhea" id="RHEA:28987"/>
        <dbReference type="ChEBI" id="CHEBI:15378"/>
        <dbReference type="ChEBI" id="CHEBI:35418"/>
    </reaction>
</comment>
<comment type="subcellular location">
    <subcellularLocation>
        <location evidence="1">Cell inner membrane</location>
        <topology evidence="1">Multi-pass membrane protein</topology>
    </subcellularLocation>
</comment>
<comment type="similarity">
    <text evidence="1">Belongs to the major facilitator superfamily. Sialate:H(+) symporter (SHS) (TC 2.A.1.12) family.</text>
</comment>
<reference key="1">
    <citation type="journal article" date="2006" name="Mol. Microbiol.">
        <title>Role of pathogenicity island-associated integrases in the genome plasticity of uropathogenic Escherichia coli strain 536.</title>
        <authorList>
            <person name="Hochhut B."/>
            <person name="Wilde C."/>
            <person name="Balling G."/>
            <person name="Middendorf B."/>
            <person name="Dobrindt U."/>
            <person name="Brzuszkiewicz E."/>
            <person name="Gottschalk G."/>
            <person name="Carniel E."/>
            <person name="Hacker J."/>
        </authorList>
    </citation>
    <scope>NUCLEOTIDE SEQUENCE [LARGE SCALE GENOMIC DNA]</scope>
    <source>
        <strain>536 / UPEC</strain>
    </source>
</reference>
<gene>
    <name evidence="1" type="primary">nanT</name>
    <name type="ordered locus">ECP_3307</name>
</gene>
<proteinExistence type="inferred from homology"/>
<protein>
    <recommendedName>
        <fullName evidence="1">Sialic acid transporter NanT</fullName>
    </recommendedName>
    <alternativeName>
        <fullName evidence="1">Sialic acid permease</fullName>
    </alternativeName>
    <alternativeName>
        <fullName evidence="1">Sialic acid/H(+) symporter</fullName>
    </alternativeName>
</protein>